<evidence type="ECO:0000250" key="1"/>
<evidence type="ECO:0000250" key="2">
    <source>
        <dbReference type="UniProtKB" id="P24941"/>
    </source>
</evidence>
<evidence type="ECO:0000250" key="3">
    <source>
        <dbReference type="UniProtKB" id="Q03957"/>
    </source>
</evidence>
<evidence type="ECO:0000255" key="4"/>
<evidence type="ECO:0000255" key="5">
    <source>
        <dbReference type="PROSITE-ProRule" id="PRU00159"/>
    </source>
</evidence>
<evidence type="ECO:0000255" key="6">
    <source>
        <dbReference type="PROSITE-ProRule" id="PRU10027"/>
    </source>
</evidence>
<evidence type="ECO:0000256" key="7">
    <source>
        <dbReference type="SAM" id="MobiDB-lite"/>
    </source>
</evidence>
<evidence type="ECO:0000269" key="8">
    <source>
    </source>
</evidence>
<evidence type="ECO:0000269" key="9">
    <source>
    </source>
</evidence>
<evidence type="ECO:0000269" key="10">
    <source>
    </source>
</evidence>
<evidence type="ECO:0000269" key="11">
    <source>
    </source>
</evidence>
<evidence type="ECO:0000305" key="12"/>
<evidence type="ECO:0000312" key="13">
    <source>
        <dbReference type="EMBL" id="CAB16269.1"/>
    </source>
</evidence>
<name>CTK1_SCHPO</name>
<comment type="function">
    <text evidence="1 8 10">Catalytic subunit of the CTDK-I complex, which hyperphosphorylates the C-terminal heptapeptide repeat domain (CTD) of the largest RNA polymerase II subunit. Involved in RNA polymerase II transcriptional elongation and pre-mRNA 3'-end processing (By similarity). Together with ctk2/lsc1, required for the regulation of cytokinesis by phosphorylating 'Ser-2' residues found in the heptad repeats of the CTD. Required for nuclear localization of ctk2/lsc1. Positively regulates the septation initiation network (SIN) and promotes successful completion of cytokinesis in response to perturbation of the actomyosin ring. Acts in parallel to clp1 to promote actomyosin ring stability upon cytokinesis checkpoint activation.</text>
</comment>
<comment type="catalytic activity">
    <reaction evidence="3">
        <text>[DNA-directed RNA polymerase] + ATP = phospho-[DNA-directed RNA polymerase] + ADP + H(+)</text>
        <dbReference type="Rhea" id="RHEA:10216"/>
        <dbReference type="Rhea" id="RHEA-COMP:11321"/>
        <dbReference type="Rhea" id="RHEA-COMP:11322"/>
        <dbReference type="ChEBI" id="CHEBI:15378"/>
        <dbReference type="ChEBI" id="CHEBI:30616"/>
        <dbReference type="ChEBI" id="CHEBI:43176"/>
        <dbReference type="ChEBI" id="CHEBI:68546"/>
        <dbReference type="ChEBI" id="CHEBI:456216"/>
        <dbReference type="EC" id="2.7.11.23"/>
    </reaction>
</comment>
<comment type="subunit">
    <text evidence="1 10">CTDK-I consists of three subunits, ctk1/lsk1, ctk2/lsc1 and ctk3 (also called alpha, beta and gamma) (By similarity). Interacts with ctk2/lsc1. This interaction is dependent on kinase activity.</text>
</comment>
<comment type="subcellular location">
    <subcellularLocation>
        <location evidence="8 9 10">Nucleus</location>
        <location evidence="8 9 10">Nucleolus</location>
    </subcellularLocation>
    <text evidence="8 9">Localized to nucleus during all cell cycle phases.</text>
</comment>
<comment type="disruption phenotype">
    <text evidence="8">Cells display severe cytokinesis defects. They are able to form, but not maintain the integrity of the actomyosin ring and are unable to successfully complete division septum formation upon treatment with low doses (0.3 uM) of actin depolymerizing drug, latrunculin A (LatA). However, deletion mutants are competent to delay nuclear cycle progression after cytokinetic failure upon treatment with LatA. In addition, deletion mutants suppress the lethal, multiseptate phenotype conferred by hyperactivation of the SIN.</text>
</comment>
<comment type="similarity">
    <text evidence="4">Belongs to the protein kinase superfamily. CMGC Ser/Thr protein kinase family. CDC2/CDKX subfamily.</text>
</comment>
<protein>
    <recommendedName>
        <fullName>CTD kinase subunit alpha</fullName>
        <shortName>CTDK-I subunit alpha</shortName>
        <ecNumber>2.7.11.23</ecNumber>
    </recommendedName>
    <alternativeName>
        <fullName>CTD kinase subunit 1</fullName>
    </alternativeName>
    <alternativeName>
        <fullName>Latrunculin sensitive kinase 1</fullName>
    </alternativeName>
</protein>
<accession>O14098</accession>
<proteinExistence type="evidence at protein level"/>
<dbReference type="EC" id="2.7.11.23"/>
<dbReference type="EMBL" id="CU329670">
    <property type="protein sequence ID" value="CAB16269.1"/>
    <property type="molecule type" value="Genomic_DNA"/>
</dbReference>
<dbReference type="PIR" id="T38547">
    <property type="entry name" value="T38547"/>
</dbReference>
<dbReference type="RefSeq" id="NP_594393.1">
    <property type="nucleotide sequence ID" value="NM_001019816.2"/>
</dbReference>
<dbReference type="SMR" id="O14098"/>
<dbReference type="BioGRID" id="278168">
    <property type="interactions" value="247"/>
</dbReference>
<dbReference type="FunCoup" id="O14098">
    <property type="interactions" value="214"/>
</dbReference>
<dbReference type="STRING" id="284812.O14098"/>
<dbReference type="iPTMnet" id="O14098"/>
<dbReference type="SwissPalm" id="O14098"/>
<dbReference type="PaxDb" id="4896-SPAC2F3.15.1"/>
<dbReference type="EnsemblFungi" id="SPAC2F3.15.1">
    <property type="protein sequence ID" value="SPAC2F3.15.1:pep"/>
    <property type="gene ID" value="SPAC2F3.15"/>
</dbReference>
<dbReference type="GeneID" id="2541672"/>
<dbReference type="KEGG" id="spo:2541672"/>
<dbReference type="PomBase" id="SPAC2F3.15">
    <property type="gene designation" value="lsk1"/>
</dbReference>
<dbReference type="VEuPathDB" id="FungiDB:SPAC2F3.15"/>
<dbReference type="eggNOG" id="KOG0600">
    <property type="taxonomic scope" value="Eukaryota"/>
</dbReference>
<dbReference type="HOGENOM" id="CLU_000288_181_17_1"/>
<dbReference type="InParanoid" id="O14098"/>
<dbReference type="OMA" id="ETLMHEY"/>
<dbReference type="PhylomeDB" id="O14098"/>
<dbReference type="BRENDA" id="2.7.11.23">
    <property type="organism ID" value="5613"/>
</dbReference>
<dbReference type="Reactome" id="R-SPO-674695">
    <property type="pathway name" value="RNA Polymerase II Pre-transcription Events"/>
</dbReference>
<dbReference type="Reactome" id="R-SPO-6796648">
    <property type="pathway name" value="TP53 Regulates Transcription of DNA Repair Genes"/>
</dbReference>
<dbReference type="Reactome" id="R-SPO-6798695">
    <property type="pathway name" value="Neutrophil degranulation"/>
</dbReference>
<dbReference type="Reactome" id="R-SPO-6807505">
    <property type="pathway name" value="RNA polymerase II transcribes snRNA genes"/>
</dbReference>
<dbReference type="Reactome" id="R-SPO-9018519">
    <property type="pathway name" value="Estrogen-dependent gene expression"/>
</dbReference>
<dbReference type="PRO" id="PR:O14098"/>
<dbReference type="Proteomes" id="UP000002485">
    <property type="component" value="Chromosome I"/>
</dbReference>
<dbReference type="GO" id="GO:0000785">
    <property type="term" value="C:chromatin"/>
    <property type="evidence" value="ECO:0000314"/>
    <property type="project" value="PomBase"/>
</dbReference>
<dbReference type="GO" id="GO:0070692">
    <property type="term" value="C:CTDK-1 complex"/>
    <property type="evidence" value="ECO:0000353"/>
    <property type="project" value="PomBase"/>
</dbReference>
<dbReference type="GO" id="GO:0008024">
    <property type="term" value="C:cyclin/CDK positive transcription elongation factor complex"/>
    <property type="evidence" value="ECO:0000318"/>
    <property type="project" value="GO_Central"/>
</dbReference>
<dbReference type="GO" id="GO:0019908">
    <property type="term" value="C:nuclear cyclin-dependent protein kinase holoenzyme complex"/>
    <property type="evidence" value="ECO:0000353"/>
    <property type="project" value="PomBase"/>
</dbReference>
<dbReference type="GO" id="GO:0005730">
    <property type="term" value="C:nucleolus"/>
    <property type="evidence" value="ECO:0007005"/>
    <property type="project" value="PomBase"/>
</dbReference>
<dbReference type="GO" id="GO:0005634">
    <property type="term" value="C:nucleus"/>
    <property type="evidence" value="ECO:0000314"/>
    <property type="project" value="PomBase"/>
</dbReference>
<dbReference type="GO" id="GO:0005524">
    <property type="term" value="F:ATP binding"/>
    <property type="evidence" value="ECO:0007669"/>
    <property type="project" value="UniProtKB-KW"/>
</dbReference>
<dbReference type="GO" id="GO:0030332">
    <property type="term" value="F:cyclin binding"/>
    <property type="evidence" value="ECO:0000318"/>
    <property type="project" value="GO_Central"/>
</dbReference>
<dbReference type="GO" id="GO:0004693">
    <property type="term" value="F:cyclin-dependent protein serine/threonine kinase activity"/>
    <property type="evidence" value="ECO:0000315"/>
    <property type="project" value="PomBase"/>
</dbReference>
<dbReference type="GO" id="GO:0008353">
    <property type="term" value="F:RNA polymerase II CTD heptapeptide repeat kinase activity"/>
    <property type="evidence" value="ECO:0000315"/>
    <property type="project" value="PomBase"/>
</dbReference>
<dbReference type="GO" id="GO:0140834">
    <property type="term" value="F:RNA polymerase II CTD heptapeptide repeat S2 kinase activity"/>
    <property type="evidence" value="ECO:0000314"/>
    <property type="project" value="PomBase"/>
</dbReference>
<dbReference type="GO" id="GO:0006397">
    <property type="term" value="P:mRNA processing"/>
    <property type="evidence" value="ECO:0007669"/>
    <property type="project" value="UniProtKB-KW"/>
</dbReference>
<dbReference type="GO" id="GO:0045944">
    <property type="term" value="P:positive regulation of transcription by RNA polymerase II"/>
    <property type="evidence" value="ECO:0000315"/>
    <property type="project" value="PomBase"/>
</dbReference>
<dbReference type="GO" id="GO:0032968">
    <property type="term" value="P:positive regulation of transcription elongation by RNA polymerase II"/>
    <property type="evidence" value="ECO:0000318"/>
    <property type="project" value="GO_Central"/>
</dbReference>
<dbReference type="CDD" id="cd07840">
    <property type="entry name" value="STKc_CDK9_like"/>
    <property type="match status" value="1"/>
</dbReference>
<dbReference type="FunFam" id="1.10.510.10:FF:000440">
    <property type="entry name" value="Serine/threonine-protein kinase bur1"/>
    <property type="match status" value="1"/>
</dbReference>
<dbReference type="FunFam" id="3.30.200.20:FF:000270">
    <property type="entry name" value="Serine/threonine-protein kinase bur1"/>
    <property type="match status" value="1"/>
</dbReference>
<dbReference type="Gene3D" id="3.30.200.20">
    <property type="entry name" value="Phosphorylase Kinase, domain 1"/>
    <property type="match status" value="1"/>
</dbReference>
<dbReference type="Gene3D" id="1.10.510.10">
    <property type="entry name" value="Transferase(Phosphotransferase) domain 1"/>
    <property type="match status" value="1"/>
</dbReference>
<dbReference type="InterPro" id="IPR050108">
    <property type="entry name" value="CDK"/>
</dbReference>
<dbReference type="InterPro" id="IPR011009">
    <property type="entry name" value="Kinase-like_dom_sf"/>
</dbReference>
<dbReference type="InterPro" id="IPR000719">
    <property type="entry name" value="Prot_kinase_dom"/>
</dbReference>
<dbReference type="InterPro" id="IPR017441">
    <property type="entry name" value="Protein_kinase_ATP_BS"/>
</dbReference>
<dbReference type="InterPro" id="IPR008271">
    <property type="entry name" value="Ser/Thr_kinase_AS"/>
</dbReference>
<dbReference type="PANTHER" id="PTHR24056">
    <property type="entry name" value="CELL DIVISION PROTEIN KINASE"/>
    <property type="match status" value="1"/>
</dbReference>
<dbReference type="PANTHER" id="PTHR24056:SF546">
    <property type="entry name" value="CYCLIN-DEPENDENT KINASE 12"/>
    <property type="match status" value="1"/>
</dbReference>
<dbReference type="Pfam" id="PF00069">
    <property type="entry name" value="Pkinase"/>
    <property type="match status" value="1"/>
</dbReference>
<dbReference type="SMART" id="SM00220">
    <property type="entry name" value="S_TKc"/>
    <property type="match status" value="1"/>
</dbReference>
<dbReference type="SUPFAM" id="SSF56112">
    <property type="entry name" value="Protein kinase-like (PK-like)"/>
    <property type="match status" value="1"/>
</dbReference>
<dbReference type="PROSITE" id="PS00107">
    <property type="entry name" value="PROTEIN_KINASE_ATP"/>
    <property type="match status" value="1"/>
</dbReference>
<dbReference type="PROSITE" id="PS50011">
    <property type="entry name" value="PROTEIN_KINASE_DOM"/>
    <property type="match status" value="1"/>
</dbReference>
<dbReference type="PROSITE" id="PS00108">
    <property type="entry name" value="PROTEIN_KINASE_ST"/>
    <property type="match status" value="1"/>
</dbReference>
<reference evidence="13" key="1">
    <citation type="journal article" date="2002" name="Nature">
        <title>The genome sequence of Schizosaccharomyces pombe.</title>
        <authorList>
            <person name="Wood V."/>
            <person name="Gwilliam R."/>
            <person name="Rajandream M.A."/>
            <person name="Lyne M.H."/>
            <person name="Lyne R."/>
            <person name="Stewart A."/>
            <person name="Sgouros J.G."/>
            <person name="Peat N."/>
            <person name="Hayles J."/>
            <person name="Baker S.G."/>
            <person name="Basham D."/>
            <person name="Bowman S."/>
            <person name="Brooks K."/>
            <person name="Brown D."/>
            <person name="Brown S."/>
            <person name="Chillingworth T."/>
            <person name="Churcher C.M."/>
            <person name="Collins M."/>
            <person name="Connor R."/>
            <person name="Cronin A."/>
            <person name="Davis P."/>
            <person name="Feltwell T."/>
            <person name="Fraser A."/>
            <person name="Gentles S."/>
            <person name="Goble A."/>
            <person name="Hamlin N."/>
            <person name="Harris D.E."/>
            <person name="Hidalgo J."/>
            <person name="Hodgson G."/>
            <person name="Holroyd S."/>
            <person name="Hornsby T."/>
            <person name="Howarth S."/>
            <person name="Huckle E.J."/>
            <person name="Hunt S."/>
            <person name="Jagels K."/>
            <person name="James K.D."/>
            <person name="Jones L."/>
            <person name="Jones M."/>
            <person name="Leather S."/>
            <person name="McDonald S."/>
            <person name="McLean J."/>
            <person name="Mooney P."/>
            <person name="Moule S."/>
            <person name="Mungall K.L."/>
            <person name="Murphy L.D."/>
            <person name="Niblett D."/>
            <person name="Odell C."/>
            <person name="Oliver K."/>
            <person name="O'Neil S."/>
            <person name="Pearson D."/>
            <person name="Quail M.A."/>
            <person name="Rabbinowitsch E."/>
            <person name="Rutherford K.M."/>
            <person name="Rutter S."/>
            <person name="Saunders D."/>
            <person name="Seeger K."/>
            <person name="Sharp S."/>
            <person name="Skelton J."/>
            <person name="Simmonds M.N."/>
            <person name="Squares R."/>
            <person name="Squares S."/>
            <person name="Stevens K."/>
            <person name="Taylor K."/>
            <person name="Taylor R.G."/>
            <person name="Tivey A."/>
            <person name="Walsh S.V."/>
            <person name="Warren T."/>
            <person name="Whitehead S."/>
            <person name="Woodward J.R."/>
            <person name="Volckaert G."/>
            <person name="Aert R."/>
            <person name="Robben J."/>
            <person name="Grymonprez B."/>
            <person name="Weltjens I."/>
            <person name="Vanstreels E."/>
            <person name="Rieger M."/>
            <person name="Schaefer M."/>
            <person name="Mueller-Auer S."/>
            <person name="Gabel C."/>
            <person name="Fuchs M."/>
            <person name="Duesterhoeft A."/>
            <person name="Fritzc C."/>
            <person name="Holzer E."/>
            <person name="Moestl D."/>
            <person name="Hilbert H."/>
            <person name="Borzym K."/>
            <person name="Langer I."/>
            <person name="Beck A."/>
            <person name="Lehrach H."/>
            <person name="Reinhardt R."/>
            <person name="Pohl T.M."/>
            <person name="Eger P."/>
            <person name="Zimmermann W."/>
            <person name="Wedler H."/>
            <person name="Wambutt R."/>
            <person name="Purnelle B."/>
            <person name="Goffeau A."/>
            <person name="Cadieu E."/>
            <person name="Dreano S."/>
            <person name="Gloux S."/>
            <person name="Lelaure V."/>
            <person name="Mottier S."/>
            <person name="Galibert F."/>
            <person name="Aves S.J."/>
            <person name="Xiang Z."/>
            <person name="Hunt C."/>
            <person name="Moore K."/>
            <person name="Hurst S.M."/>
            <person name="Lucas M."/>
            <person name="Rochet M."/>
            <person name="Gaillardin C."/>
            <person name="Tallada V.A."/>
            <person name="Garzon A."/>
            <person name="Thode G."/>
            <person name="Daga R.R."/>
            <person name="Cruzado L."/>
            <person name="Jimenez J."/>
            <person name="Sanchez M."/>
            <person name="del Rey F."/>
            <person name="Benito J."/>
            <person name="Dominguez A."/>
            <person name="Revuelta J.L."/>
            <person name="Moreno S."/>
            <person name="Armstrong J."/>
            <person name="Forsburg S.L."/>
            <person name="Cerutti L."/>
            <person name="Lowe T."/>
            <person name="McCombie W.R."/>
            <person name="Paulsen I."/>
            <person name="Potashkin J."/>
            <person name="Shpakovski G.V."/>
            <person name="Ussery D."/>
            <person name="Barrell B.G."/>
            <person name="Nurse P."/>
        </authorList>
    </citation>
    <scope>NUCLEOTIDE SEQUENCE [LARGE SCALE GENOMIC DNA]</scope>
    <source>
        <strain>972 / ATCC 24843</strain>
    </source>
</reference>
<reference evidence="12" key="2">
    <citation type="journal article" date="2005" name="Mol. Biol. Cell">
        <title>The nuclear kinase Lsk1p positively regulates the septation initiation network and promotes the successful completion of cytokinesis in response to perturbation of the actomyosin ring in Schizosaccharomyces pombe.</title>
        <authorList>
            <person name="Karagiannis J."/>
            <person name="Bimbo A."/>
            <person name="Rajagopalan S."/>
            <person name="Liu J."/>
            <person name="Balasubramanian M.K."/>
        </authorList>
    </citation>
    <scope>FUNCTION</scope>
    <scope>SUBCELLULAR LOCATION</scope>
    <scope>DISRUPTION PHENOTYPE</scope>
</reference>
<reference evidence="12" key="3">
    <citation type="journal article" date="2006" name="Nat. Biotechnol.">
        <title>ORFeome cloning and global analysis of protein localization in the fission yeast Schizosaccharomyces pombe.</title>
        <authorList>
            <person name="Matsuyama A."/>
            <person name="Arai R."/>
            <person name="Yashiroda Y."/>
            <person name="Shirai A."/>
            <person name="Kamata A."/>
            <person name="Sekido S."/>
            <person name="Kobayashi Y."/>
            <person name="Hashimoto A."/>
            <person name="Hamamoto M."/>
            <person name="Hiraoka Y."/>
            <person name="Horinouchi S."/>
            <person name="Yoshida M."/>
        </authorList>
    </citation>
    <scope>SUBCELLULAR LOCATION [LARGE SCALE ANALYSIS]</scope>
</reference>
<reference key="4">
    <citation type="journal article" date="2007" name="PLoS ONE">
        <title>A cyclin-dependent kinase that promotes cytokinesis through modulating phosphorylation of the carboxy terminal domain of the RNA Pol II Rpb1p sub-unit.</title>
        <authorList>
            <person name="Karagiannis J."/>
            <person name="Balasubramanian M.K."/>
        </authorList>
    </citation>
    <scope>FUNCTION</scope>
    <scope>INTERACTION WITH CTK2</scope>
    <scope>SUBCELLULAR LOCATION</scope>
    <scope>MUTAGENESIS OF LYS-306</scope>
</reference>
<reference evidence="12" key="5">
    <citation type="journal article" date="2008" name="J. Proteome Res.">
        <title>Phosphoproteome analysis of fission yeast.</title>
        <authorList>
            <person name="Wilson-Grady J.T."/>
            <person name="Villen J."/>
            <person name="Gygi S.P."/>
        </authorList>
    </citation>
    <scope>PHOSPHORYLATION [LARGE SCALE ANALYSIS] AT SER-56; SER-58; SER-104 AND SER-109</scope>
    <scope>IDENTIFICATION BY MASS SPECTROMETRY</scope>
</reference>
<gene>
    <name evidence="13" type="primary">lsk1</name>
    <name evidence="3" type="synonym">ctk1</name>
    <name type="ORF">SPAC2F3.15</name>
</gene>
<keyword id="KW-0067">ATP-binding</keyword>
<keyword id="KW-0418">Kinase</keyword>
<keyword id="KW-0507">mRNA processing</keyword>
<keyword id="KW-0547">Nucleotide-binding</keyword>
<keyword id="KW-0539">Nucleus</keyword>
<keyword id="KW-0597">Phosphoprotein</keyword>
<keyword id="KW-1185">Reference proteome</keyword>
<keyword id="KW-0723">Serine/threonine-protein kinase</keyword>
<keyword id="KW-0804">Transcription</keyword>
<keyword id="KW-0808">Transferase</keyword>
<organism>
    <name type="scientific">Schizosaccharomyces pombe (strain 972 / ATCC 24843)</name>
    <name type="common">Fission yeast</name>
    <dbReference type="NCBI Taxonomy" id="284812"/>
    <lineage>
        <taxon>Eukaryota</taxon>
        <taxon>Fungi</taxon>
        <taxon>Dikarya</taxon>
        <taxon>Ascomycota</taxon>
        <taxon>Taphrinomycotina</taxon>
        <taxon>Schizosaccharomycetes</taxon>
        <taxon>Schizosaccharomycetales</taxon>
        <taxon>Schizosaccharomycetaceae</taxon>
        <taxon>Schizosaccharomyces</taxon>
    </lineage>
</organism>
<feature type="chain" id="PRO_0000338603" description="CTD kinase subunit alpha">
    <location>
        <begin position="1"/>
        <end position="593"/>
    </location>
</feature>
<feature type="domain" description="Protein kinase" evidence="5">
    <location>
        <begin position="277"/>
        <end position="561"/>
    </location>
</feature>
<feature type="region of interest" description="Disordered" evidence="7">
    <location>
        <begin position="1"/>
        <end position="262"/>
    </location>
</feature>
<feature type="compositionally biased region" description="Polar residues" evidence="7">
    <location>
        <begin position="1"/>
        <end position="17"/>
    </location>
</feature>
<feature type="compositionally biased region" description="Polar residues" evidence="7">
    <location>
        <begin position="29"/>
        <end position="51"/>
    </location>
</feature>
<feature type="compositionally biased region" description="Basic residues" evidence="7">
    <location>
        <begin position="90"/>
        <end position="103"/>
    </location>
</feature>
<feature type="compositionally biased region" description="Low complexity" evidence="7">
    <location>
        <begin position="139"/>
        <end position="152"/>
    </location>
</feature>
<feature type="compositionally biased region" description="Polar residues" evidence="7">
    <location>
        <begin position="160"/>
        <end position="170"/>
    </location>
</feature>
<feature type="compositionally biased region" description="Low complexity" evidence="7">
    <location>
        <begin position="198"/>
        <end position="215"/>
    </location>
</feature>
<feature type="active site" description="Proton acceptor" evidence="2 5 6">
    <location>
        <position position="399"/>
    </location>
</feature>
<feature type="binding site" evidence="2 5">
    <location>
        <begin position="283"/>
        <end position="291"/>
    </location>
    <ligand>
        <name>ATP</name>
        <dbReference type="ChEBI" id="CHEBI:30616"/>
    </ligand>
</feature>
<feature type="binding site" evidence="2 5">
    <location>
        <position position="306"/>
    </location>
    <ligand>
        <name>ATP</name>
        <dbReference type="ChEBI" id="CHEBI:30616"/>
    </ligand>
</feature>
<feature type="modified residue" description="Phosphoserine" evidence="11">
    <location>
        <position position="56"/>
    </location>
</feature>
<feature type="modified residue" description="Phosphoserine" evidence="11">
    <location>
        <position position="58"/>
    </location>
</feature>
<feature type="modified residue" description="Phosphoserine" evidence="11">
    <location>
        <position position="104"/>
    </location>
</feature>
<feature type="modified residue" description="Phosphoserine" evidence="11">
    <location>
        <position position="109"/>
    </location>
</feature>
<feature type="mutagenesis site" description="No kinase activity. No interaction with ctk2/lsc1. Mislocalization of ctk2/lsc1." evidence="10">
    <original>K</original>
    <variation>R</variation>
    <location>
        <position position="306"/>
    </location>
</feature>
<sequence>MSYSKSTIYRRQGTEPNSHFRRTVEEKSQLSGTNEESLGGHTLSSNAFKNNSSSISPSSSAKDPREQRKRTFPLNDTHSSRARQHERPFRSRKSRRRKGKKAFSPRPGSPPSPSFYRSGSQKRARNLTTKDYFAKRSESSSSASVSPISPSANRNDSKRQASSFRRSPPSSVHMKPSAFNGRKVSRRPSSSPPPIPSIPHETTSSDTQKKSSVSSGFPENKHGKFHFHIPNERRSRFDQPPSKRMALTSTARESVPAPLPSPPSGPIYTYTYPKPAYEKIDQIGEGTYGKVYKAINTVTGDLVALKRIRLEQEKDGFPITTVREVKILQRLRHKNIVRLLEIMVEKSSVYMVFEYMDHDLTGVLLNSQLHFTPGNIKHLSKQIFEALAYLHHRGVLHRDIKGSNILLNNNGDLKFADFGLARFNTSSKSANYTNRVITLWFRPPELLLGETAYDTAVDIWSAGCIVMELFTGKPFFQGRDEISQLEVIYDMMGTPDVHSWPEVKNLPWYELLKPVEEKKSRFVETFKEILSPAAIDLCQKLLALNPFCRPSAHETLMHEYFTSESPPPEPAVILKNMQGSWHEWESKKRKSKR</sequence>